<accession>P83433</accession>
<name>NVSP_ALIVI</name>
<organism>
    <name type="scientific">Alitta virens</name>
    <name type="common">Sandworm</name>
    <name type="synonym">Nereis virens</name>
    <dbReference type="NCBI Taxonomy" id="880429"/>
    <lineage>
        <taxon>Eukaryota</taxon>
        <taxon>Metazoa</taxon>
        <taxon>Spiralia</taxon>
        <taxon>Lophotrochozoa</taxon>
        <taxon>Annelida</taxon>
        <taxon>Polychaeta</taxon>
        <taxon>Errantia</taxon>
        <taxon>Phyllodocida</taxon>
        <taxon>Nereididae</taxon>
        <taxon>Alitta</taxon>
    </lineage>
</organism>
<keyword id="KW-0903">Direct protein sequencing</keyword>
<keyword id="KW-1206">Fibrinogenolytic toxin</keyword>
<keyword id="KW-1205">Fibrinolytic toxin</keyword>
<keyword id="KW-1199">Hemostasis impairing toxin</keyword>
<keyword id="KW-0378">Hydrolase</keyword>
<keyword id="KW-0645">Protease</keyword>
<keyword id="KW-0964">Secreted</keyword>
<keyword id="KW-0720">Serine protease</keyword>
<keyword id="KW-0800">Toxin</keyword>
<evidence type="ECO:0000269" key="1">
    <source>
    </source>
</evidence>
<evidence type="ECO:0000269" key="2">
    <source ref="2"/>
</evidence>
<evidence type="ECO:0000303" key="3">
    <source>
    </source>
</evidence>
<evidence type="ECO:0000305" key="4"/>
<reference evidence="4" key="1">
    <citation type="journal article" date="2007" name="Biochimie">
        <title>A novel fibrinolytic serine protease from the polychaete Nereis (Neanthes) virens (Sars): purification and characterization.</title>
        <authorList>
            <person name="Zhang Y."/>
            <person name="Cui J."/>
            <person name="Zhang R."/>
            <person name="Wang Y."/>
            <person name="Hong M."/>
        </authorList>
    </citation>
    <scope>PROTEIN SEQUENCE</scope>
    <scope>FUNCTION</scope>
    <scope>ACTIVITY REGULATION</scope>
    <scope>BIOPHYSICOCHEMICAL PROPERTIES</scope>
    <scope>SUBUNIT</scope>
    <source>
        <tissue evidence="1">Coelomic fluid</tissue>
    </source>
</reference>
<reference evidence="4" key="2">
    <citation type="submission" date="2002-07" db="UniProtKB">
        <authorList>
            <person name="Hong M."/>
            <person name="Cheng Y."/>
            <person name="Hong X.Y."/>
            <person name="Shi F.L."/>
            <person name="Li Q."/>
            <person name="Gao L."/>
        </authorList>
    </citation>
    <scope>PROTEIN SEQUENCE OF 1-70</scope>
    <scope>SUBCELLULAR LOCATION</scope>
    <scope>TISSUE SPECIFICITY</scope>
</reference>
<comment type="function">
    <text evidence="1">Serine protease. Hydrolyzes the alpha chains of fibrin and fibrinogen completely, has lower activity on the beta and gamma chains of fibrin and fibrinogen.</text>
</comment>
<comment type="activity regulation">
    <text evidence="1">Inhibited by the serine protease inhibitors DFP, PMSF and TLCK. Not inhibited by the serine protease inhibitors aprotinin, elastinal, SBTI and benzamidine, the cysteine protease inhibitors iodoacetate and E64, or the metalloprotease inhibitors EDTA and EGTA.</text>
</comment>
<comment type="biophysicochemical properties">
    <phDependence>
        <text evidence="1">Optimum pH is 7.8. Active from pH 4.0 to pH 9.0.</text>
    </phDependence>
    <temperatureDependence>
        <text evidence="1">Optimum temperature is 45 degrees Celsius. Active from 30 to 55 degrees Celsius.</text>
    </temperatureDependence>
</comment>
<comment type="subunit">
    <text evidence="1">Monomer.</text>
</comment>
<comment type="subcellular location">
    <subcellularLocation>
        <location evidence="2">Secreted</location>
    </subcellularLocation>
</comment>
<comment type="tissue specificity">
    <text evidence="2">Body cavity.</text>
</comment>
<comment type="similarity">
    <text evidence="4">Belongs to the peptidase S8 family.</text>
</comment>
<comment type="caution">
    <text evidence="1">The order of the peptides shown is unknown.</text>
</comment>
<feature type="chain" id="PRO_0000273258" description="N-V protease">
    <location>
        <begin position="1" status="less than"/>
        <end position="80" status="greater than"/>
    </location>
</feature>
<feature type="non-consecutive residues" evidence="3">
    <location>
        <begin position="10"/>
        <end position="11"/>
    </location>
</feature>
<feature type="non-consecutive residues" evidence="3">
    <location>
        <begin position="16"/>
        <end position="17"/>
    </location>
</feature>
<feature type="non-consecutive residues" evidence="3">
    <location>
        <begin position="19"/>
        <end position="20"/>
    </location>
</feature>
<feature type="non-consecutive residues" evidence="3">
    <location>
        <begin position="26"/>
        <end position="27"/>
    </location>
</feature>
<feature type="non-consecutive residues" evidence="3">
    <location>
        <begin position="35"/>
        <end position="36"/>
    </location>
</feature>
<feature type="non-consecutive residues" evidence="3">
    <location>
        <begin position="43"/>
        <end position="44"/>
    </location>
</feature>
<feature type="non-consecutive residues" evidence="3">
    <location>
        <begin position="54"/>
        <end position="55"/>
    </location>
</feature>
<feature type="non-consecutive residues" evidence="3">
    <location>
        <begin position="62"/>
        <end position="63"/>
    </location>
</feature>
<feature type="non-consecutive residues" evidence="3">
    <location>
        <begin position="70"/>
        <end position="71"/>
    </location>
</feature>
<feature type="non-terminal residue" evidence="3">
    <location>
        <position position="1"/>
    </location>
</feature>
<feature type="non-terminal residue" evidence="3">
    <location>
        <position position="80"/>
    </location>
</feature>
<dbReference type="EC" id="3.4.21.-"/>
<dbReference type="GO" id="GO:0005576">
    <property type="term" value="C:extracellular region"/>
    <property type="evidence" value="ECO:0007669"/>
    <property type="project" value="UniProtKB-SubCell"/>
</dbReference>
<dbReference type="GO" id="GO:0008236">
    <property type="term" value="F:serine-type peptidase activity"/>
    <property type="evidence" value="ECO:0007669"/>
    <property type="project" value="UniProtKB-KW"/>
</dbReference>
<dbReference type="GO" id="GO:0090729">
    <property type="term" value="F:toxin activity"/>
    <property type="evidence" value="ECO:0007669"/>
    <property type="project" value="UniProtKB-KW"/>
</dbReference>
<dbReference type="GO" id="GO:0006508">
    <property type="term" value="P:proteolysis"/>
    <property type="evidence" value="ECO:0007669"/>
    <property type="project" value="UniProtKB-KW"/>
</dbReference>
<dbReference type="PROSITE" id="PS00136">
    <property type="entry name" value="SUBTILASE_ASP"/>
    <property type="match status" value="1"/>
</dbReference>
<proteinExistence type="evidence at protein level"/>
<sequence length="80" mass="8888">QAPNYSTASYNVVAVKINLFLSTNNKLYIHDTGVRAVYLAGMKVYLAANPTASSQTFNSDTLVYILDTGINEPNYYINLY</sequence>
<protein>
    <recommendedName>
        <fullName>N-V protease</fullName>
        <ecNumber>3.4.21.-</ecNumber>
    </recommendedName>
</protein>